<keyword id="KW-0686">Riboflavin biosynthesis</keyword>
<keyword id="KW-0808">Transferase</keyword>
<evidence type="ECO:0000255" key="1">
    <source>
        <dbReference type="HAMAP-Rule" id="MF_00178"/>
    </source>
</evidence>
<proteinExistence type="inferred from homology"/>
<organism>
    <name type="scientific">Prochlorococcus marinus (strain NATL1A)</name>
    <dbReference type="NCBI Taxonomy" id="167555"/>
    <lineage>
        <taxon>Bacteria</taxon>
        <taxon>Bacillati</taxon>
        <taxon>Cyanobacteriota</taxon>
        <taxon>Cyanophyceae</taxon>
        <taxon>Synechococcales</taxon>
        <taxon>Prochlorococcaceae</taxon>
        <taxon>Prochlorococcus</taxon>
    </lineage>
</organism>
<accession>A2C5A7</accession>
<reference key="1">
    <citation type="journal article" date="2007" name="PLoS Genet.">
        <title>Patterns and implications of gene gain and loss in the evolution of Prochlorococcus.</title>
        <authorList>
            <person name="Kettler G.C."/>
            <person name="Martiny A.C."/>
            <person name="Huang K."/>
            <person name="Zucker J."/>
            <person name="Coleman M.L."/>
            <person name="Rodrigue S."/>
            <person name="Chen F."/>
            <person name="Lapidus A."/>
            <person name="Ferriera S."/>
            <person name="Johnson J."/>
            <person name="Steglich C."/>
            <person name="Church G.M."/>
            <person name="Richardson P."/>
            <person name="Chisholm S.W."/>
        </authorList>
    </citation>
    <scope>NUCLEOTIDE SEQUENCE [LARGE SCALE GENOMIC DNA]</scope>
    <source>
        <strain>NATL1A</strain>
    </source>
</reference>
<sequence length="158" mass="16957">MATIEGTFEKSSSLKVAIVIARFNDLITNKLLSGCLDCLSRHGIDVSESSNQIDVAWVPGSFELPIISQELARTGKYEVLITLGAVIRGDTPHFDVVVSEASKGIATVSRETGVPIIFGVLTTDTMQQALERAGIKNNLGWSYALQALEMGSLMKAVT</sequence>
<feature type="chain" id="PRO_1000040479" description="6,7-dimethyl-8-ribityllumazine synthase">
    <location>
        <begin position="1"/>
        <end position="158"/>
    </location>
</feature>
<feature type="active site" description="Proton donor" evidence="1">
    <location>
        <position position="93"/>
    </location>
</feature>
<feature type="binding site" evidence="1">
    <location>
        <position position="23"/>
    </location>
    <ligand>
        <name>5-amino-6-(D-ribitylamino)uracil</name>
        <dbReference type="ChEBI" id="CHEBI:15934"/>
    </ligand>
</feature>
<feature type="binding site" evidence="1">
    <location>
        <begin position="61"/>
        <end position="63"/>
    </location>
    <ligand>
        <name>5-amino-6-(D-ribitylamino)uracil</name>
        <dbReference type="ChEBI" id="CHEBI:15934"/>
    </ligand>
</feature>
<feature type="binding site" evidence="1">
    <location>
        <begin position="85"/>
        <end position="87"/>
    </location>
    <ligand>
        <name>5-amino-6-(D-ribitylamino)uracil</name>
        <dbReference type="ChEBI" id="CHEBI:15934"/>
    </ligand>
</feature>
<feature type="binding site" evidence="1">
    <location>
        <begin position="90"/>
        <end position="91"/>
    </location>
    <ligand>
        <name>(2S)-2-hydroxy-3-oxobutyl phosphate</name>
        <dbReference type="ChEBI" id="CHEBI:58830"/>
    </ligand>
</feature>
<feature type="binding site" evidence="1">
    <location>
        <position position="118"/>
    </location>
    <ligand>
        <name>5-amino-6-(D-ribitylamino)uracil</name>
        <dbReference type="ChEBI" id="CHEBI:15934"/>
    </ligand>
</feature>
<feature type="binding site" evidence="1">
    <location>
        <position position="132"/>
    </location>
    <ligand>
        <name>(2S)-2-hydroxy-3-oxobutyl phosphate</name>
        <dbReference type="ChEBI" id="CHEBI:58830"/>
    </ligand>
</feature>
<protein>
    <recommendedName>
        <fullName evidence="1">6,7-dimethyl-8-ribityllumazine synthase</fullName>
        <shortName evidence="1">DMRL synthase</shortName>
        <shortName evidence="1">LS</shortName>
        <shortName evidence="1">Lumazine synthase</shortName>
        <ecNumber evidence="1">2.5.1.78</ecNumber>
    </recommendedName>
</protein>
<dbReference type="EC" id="2.5.1.78" evidence="1"/>
<dbReference type="EMBL" id="CP000553">
    <property type="protein sequence ID" value="ABM76667.1"/>
    <property type="molecule type" value="Genomic_DNA"/>
</dbReference>
<dbReference type="RefSeq" id="WP_011824611.1">
    <property type="nucleotide sequence ID" value="NC_008819.1"/>
</dbReference>
<dbReference type="SMR" id="A2C5A7"/>
<dbReference type="KEGG" id="pme:NATL1_21111"/>
<dbReference type="eggNOG" id="COG0054">
    <property type="taxonomic scope" value="Bacteria"/>
</dbReference>
<dbReference type="HOGENOM" id="CLU_089358_1_1_3"/>
<dbReference type="UniPathway" id="UPA00275">
    <property type="reaction ID" value="UER00404"/>
</dbReference>
<dbReference type="Proteomes" id="UP000002592">
    <property type="component" value="Chromosome"/>
</dbReference>
<dbReference type="GO" id="GO:0005829">
    <property type="term" value="C:cytosol"/>
    <property type="evidence" value="ECO:0007669"/>
    <property type="project" value="TreeGrafter"/>
</dbReference>
<dbReference type="GO" id="GO:0009349">
    <property type="term" value="C:riboflavin synthase complex"/>
    <property type="evidence" value="ECO:0007669"/>
    <property type="project" value="InterPro"/>
</dbReference>
<dbReference type="GO" id="GO:0000906">
    <property type="term" value="F:6,7-dimethyl-8-ribityllumazine synthase activity"/>
    <property type="evidence" value="ECO:0007669"/>
    <property type="project" value="UniProtKB-UniRule"/>
</dbReference>
<dbReference type="GO" id="GO:0009231">
    <property type="term" value="P:riboflavin biosynthetic process"/>
    <property type="evidence" value="ECO:0007669"/>
    <property type="project" value="UniProtKB-UniRule"/>
</dbReference>
<dbReference type="CDD" id="cd09209">
    <property type="entry name" value="Lumazine_synthase-I"/>
    <property type="match status" value="1"/>
</dbReference>
<dbReference type="FunFam" id="3.40.50.960:FF:000001">
    <property type="entry name" value="6,7-dimethyl-8-ribityllumazine synthase"/>
    <property type="match status" value="1"/>
</dbReference>
<dbReference type="Gene3D" id="3.40.50.960">
    <property type="entry name" value="Lumazine/riboflavin synthase"/>
    <property type="match status" value="1"/>
</dbReference>
<dbReference type="HAMAP" id="MF_00178">
    <property type="entry name" value="Lumazine_synth"/>
    <property type="match status" value="1"/>
</dbReference>
<dbReference type="InterPro" id="IPR034964">
    <property type="entry name" value="LS"/>
</dbReference>
<dbReference type="InterPro" id="IPR002180">
    <property type="entry name" value="LS/RS"/>
</dbReference>
<dbReference type="InterPro" id="IPR036467">
    <property type="entry name" value="LS/RS_sf"/>
</dbReference>
<dbReference type="NCBIfam" id="TIGR00114">
    <property type="entry name" value="lumazine-synth"/>
    <property type="match status" value="1"/>
</dbReference>
<dbReference type="PANTHER" id="PTHR21058:SF0">
    <property type="entry name" value="6,7-DIMETHYL-8-RIBITYLLUMAZINE SYNTHASE"/>
    <property type="match status" value="1"/>
</dbReference>
<dbReference type="PANTHER" id="PTHR21058">
    <property type="entry name" value="6,7-DIMETHYL-8-RIBITYLLUMAZINE SYNTHASE DMRL SYNTHASE LUMAZINE SYNTHASE"/>
    <property type="match status" value="1"/>
</dbReference>
<dbReference type="Pfam" id="PF00885">
    <property type="entry name" value="DMRL_synthase"/>
    <property type="match status" value="1"/>
</dbReference>
<dbReference type="SUPFAM" id="SSF52121">
    <property type="entry name" value="Lumazine synthase"/>
    <property type="match status" value="1"/>
</dbReference>
<name>RISB_PROM1</name>
<gene>
    <name evidence="1" type="primary">ribH</name>
    <name type="ordered locus">NATL1_21111</name>
</gene>
<comment type="function">
    <text evidence="1">Catalyzes the formation of 6,7-dimethyl-8-ribityllumazine by condensation of 5-amino-6-(D-ribitylamino)uracil with 3,4-dihydroxy-2-butanone 4-phosphate. This is the penultimate step in the biosynthesis of riboflavin.</text>
</comment>
<comment type="catalytic activity">
    <reaction evidence="1">
        <text>(2S)-2-hydroxy-3-oxobutyl phosphate + 5-amino-6-(D-ribitylamino)uracil = 6,7-dimethyl-8-(1-D-ribityl)lumazine + phosphate + 2 H2O + H(+)</text>
        <dbReference type="Rhea" id="RHEA:26152"/>
        <dbReference type="ChEBI" id="CHEBI:15377"/>
        <dbReference type="ChEBI" id="CHEBI:15378"/>
        <dbReference type="ChEBI" id="CHEBI:15934"/>
        <dbReference type="ChEBI" id="CHEBI:43474"/>
        <dbReference type="ChEBI" id="CHEBI:58201"/>
        <dbReference type="ChEBI" id="CHEBI:58830"/>
        <dbReference type="EC" id="2.5.1.78"/>
    </reaction>
</comment>
<comment type="pathway">
    <text evidence="1">Cofactor biosynthesis; riboflavin biosynthesis; riboflavin from 2-hydroxy-3-oxobutyl phosphate and 5-amino-6-(D-ribitylamino)uracil: step 1/2.</text>
</comment>
<comment type="similarity">
    <text evidence="1">Belongs to the DMRL synthase family.</text>
</comment>